<protein>
    <recommendedName>
        <fullName>SUMO-activating enzyme subunit 1B-2</fullName>
    </recommendedName>
    <alternativeName>
        <fullName>SUMO-activating enzyme subunit 1-2</fullName>
    </alternativeName>
    <alternativeName>
        <fullName>Ubiquitin-like 1-activating enzyme E1A</fullName>
    </alternativeName>
</protein>
<comment type="function">
    <text evidence="1">The dimeric enzyme acts as an E1 ligase for SUMO1 and SUMO2. It mediates ATP-dependent activation of SUMO proteins and formation of a thioester with a conserved cysteine residue on SAE2. Functionally redundant with its paralog SAE1A (By similarity).</text>
</comment>
<comment type="pathway">
    <text>Protein modification; protein sumoylation.</text>
</comment>
<comment type="subunit">
    <text evidence="1">Heterodimer of SAE1A or SAE1B and SAE2. The complex binds SUMO proteins via SAE2 (By similarity).</text>
</comment>
<comment type="subcellular location">
    <subcellularLocation>
        <location evidence="2">Nucleus</location>
    </subcellularLocation>
</comment>
<comment type="alternative products">
    <event type="alternative splicing"/>
    <isoform>
        <id>P0DI13-1</id>
        <name>1</name>
        <sequence type="displayed"/>
    </isoform>
    <isoform>
        <id>P0DI13-2</id>
        <name>2</name>
        <sequence type="described" ref="VSP_042660"/>
    </isoform>
</comment>
<comment type="similarity">
    <text evidence="2">Belongs to the ubiquitin-activating E1 family.</text>
</comment>
<reference key="1">
    <citation type="journal article" date="2000" name="DNA Res.">
        <title>Structural analysis of Arabidopsis thaliana chromosome 5. X. Sequence features of the regions of 3,076,755 bp covered by sixty P1 and TAC clones.</title>
        <authorList>
            <person name="Sato S."/>
            <person name="Nakamura Y."/>
            <person name="Kaneko T."/>
            <person name="Katoh T."/>
            <person name="Asamizu E."/>
            <person name="Kotani H."/>
            <person name="Tabata S."/>
        </authorList>
    </citation>
    <scope>NUCLEOTIDE SEQUENCE [LARGE SCALE GENOMIC DNA]</scope>
    <source>
        <strain>cv. Columbia</strain>
    </source>
</reference>
<reference key="2">
    <citation type="journal article" date="2017" name="Plant J.">
        <title>Araport11: a complete reannotation of the Arabidopsis thaliana reference genome.</title>
        <authorList>
            <person name="Cheng C.Y."/>
            <person name="Krishnakumar V."/>
            <person name="Chan A.P."/>
            <person name="Thibaud-Nissen F."/>
            <person name="Schobel S."/>
            <person name="Town C.D."/>
        </authorList>
    </citation>
    <scope>GENOME REANNOTATION</scope>
    <source>
        <strain>cv. Columbia</strain>
    </source>
</reference>
<reference key="3">
    <citation type="journal article" date="2012" name="Mol. Cell. Proteomics">
        <title>Comparative large-scale characterisation of plant vs. mammal proteins reveals similar and idiosyncratic N-alpha acetylation features.</title>
        <authorList>
            <person name="Bienvenut W.V."/>
            <person name="Sumpton D."/>
            <person name="Martinez A."/>
            <person name="Lilla S."/>
            <person name="Espagne C."/>
            <person name="Meinnel T."/>
            <person name="Giglione C."/>
        </authorList>
    </citation>
    <scope>ACETYLATION [LARGE SCALE ANALYSIS] AT MET-1</scope>
    <scope>IDENTIFICATION BY MASS SPECTROMETRY [LARGE SCALE ANALYSIS]</scope>
</reference>
<accession>P0DI13</accession>
<accession>Q8LCB9</accession>
<accession>Q8LKN3</accession>
<accession>Q9LUF3</accession>
<evidence type="ECO:0000250" key="1"/>
<evidence type="ECO:0000305" key="2"/>
<evidence type="ECO:0007744" key="3">
    <source>
    </source>
</evidence>
<feature type="chain" id="PRO_0000416588" description="SUMO-activating enzyme subunit 1B-2">
    <location>
        <begin position="1"/>
        <end position="320"/>
    </location>
</feature>
<feature type="modified residue" description="N-acetylmethionine" evidence="3">
    <location>
        <position position="1"/>
    </location>
</feature>
<feature type="splice variant" id="VSP_042660" description="In isoform 2." evidence="2">
    <location>
        <begin position="176"/>
        <end position="177"/>
    </location>
</feature>
<proteinExistence type="evidence at protein level"/>
<name>SA1B2_ARATH</name>
<dbReference type="EMBL" id="AB023037">
    <property type="protein sequence ID" value="BAA96981.1"/>
    <property type="molecule type" value="Genomic_DNA"/>
</dbReference>
<dbReference type="EMBL" id="CP002688">
    <property type="protein sequence ID" value="AED95978.1"/>
    <property type="molecule type" value="Genomic_DNA"/>
</dbReference>
<dbReference type="EMBL" id="CP002688">
    <property type="protein sequence ID" value="AED95979.1"/>
    <property type="molecule type" value="Genomic_DNA"/>
</dbReference>
<dbReference type="RefSeq" id="NP_001032050.1">
    <molecule id="P0DI13-2"/>
    <property type="nucleotide sequence ID" value="NM_001036973.2"/>
</dbReference>
<dbReference type="RefSeq" id="NP_568732.2">
    <molecule id="P0DI13-1"/>
    <property type="nucleotide sequence ID" value="NM_124436.4"/>
</dbReference>
<dbReference type="RefSeq" id="NP_568741.1">
    <molecule id="P0DI13-1"/>
    <property type="nucleotide sequence ID" value="NM_124446.3"/>
</dbReference>
<dbReference type="RefSeq" id="NP_851162.1">
    <molecule id="P0DI13-2"/>
    <property type="nucleotide sequence ID" value="NM_180831.2"/>
</dbReference>
<dbReference type="SMR" id="P0DI13"/>
<dbReference type="BioGRID" id="20373">
    <property type="interactions" value="4"/>
</dbReference>
<dbReference type="BioGRID" id="20385">
    <property type="interactions" value="4"/>
</dbReference>
<dbReference type="FunCoup" id="P0DI13">
    <property type="interactions" value="4320"/>
</dbReference>
<dbReference type="STRING" id="3702.P0DI13"/>
<dbReference type="iPTMnet" id="P0DI13"/>
<dbReference type="EnsemblPlants" id="AT5G50580.1">
    <property type="protein sequence ID" value="AT5G50580.1"/>
    <property type="gene ID" value="AT5G50580"/>
</dbReference>
<dbReference type="EnsemblPlants" id="AT5G50580.2">
    <molecule id="P0DI13-1"/>
    <property type="protein sequence ID" value="AT5G50580.2"/>
    <property type="gene ID" value="AT5G50580"/>
</dbReference>
<dbReference type="EnsemblPlants" id="AT5G50680.1">
    <molecule id="P0DI13-1"/>
    <property type="protein sequence ID" value="AT5G50680.1"/>
    <property type="gene ID" value="AT5G50680"/>
</dbReference>
<dbReference type="EnsemblPlants" id="AT5G50680.2">
    <property type="protein sequence ID" value="AT5G50680.2"/>
    <property type="gene ID" value="AT5G50680"/>
</dbReference>
<dbReference type="GeneID" id="835139"/>
<dbReference type="Gramene" id="AT5G50580.1">
    <property type="protein sequence ID" value="AT5G50580.1"/>
    <property type="gene ID" value="AT5G50580"/>
</dbReference>
<dbReference type="Gramene" id="AT5G50580.2">
    <molecule id="P0DI13-1"/>
    <property type="protein sequence ID" value="AT5G50580.2"/>
    <property type="gene ID" value="AT5G50580"/>
</dbReference>
<dbReference type="Gramene" id="AT5G50680.1">
    <molecule id="P0DI13-1"/>
    <property type="protein sequence ID" value="AT5G50680.1"/>
    <property type="gene ID" value="AT5G50680"/>
</dbReference>
<dbReference type="Gramene" id="AT5G50680.2">
    <property type="protein sequence ID" value="AT5G50680.2"/>
    <property type="gene ID" value="AT5G50680"/>
</dbReference>
<dbReference type="KEGG" id="ath:AT5G50580"/>
<dbReference type="KEGG" id="ath:AT5G50680"/>
<dbReference type="Araport" id="AT5G50680"/>
<dbReference type="TAIR" id="AT5G50680">
    <property type="gene designation" value="SAE1B"/>
</dbReference>
<dbReference type="InParanoid" id="P0DI13"/>
<dbReference type="OMA" id="SENIKCH"/>
<dbReference type="PhylomeDB" id="P0DI13"/>
<dbReference type="UniPathway" id="UPA00886"/>
<dbReference type="PRO" id="PR:P0DI13"/>
<dbReference type="Proteomes" id="UP000006548">
    <property type="component" value="Chromosome 5"/>
</dbReference>
<dbReference type="ExpressionAtlas" id="P0DI13">
    <property type="expression patterns" value="baseline"/>
</dbReference>
<dbReference type="GO" id="GO:0005634">
    <property type="term" value="C:nucleus"/>
    <property type="evidence" value="ECO:0000314"/>
    <property type="project" value="TAIR"/>
</dbReference>
<dbReference type="GO" id="GO:0019948">
    <property type="term" value="F:SUMO activating enzyme activity"/>
    <property type="evidence" value="ECO:0000314"/>
    <property type="project" value="TAIR"/>
</dbReference>
<dbReference type="GO" id="GO:0016925">
    <property type="term" value="P:protein sumoylation"/>
    <property type="evidence" value="ECO:0000314"/>
    <property type="project" value="TAIR"/>
</dbReference>
<dbReference type="CDD" id="cd01492">
    <property type="entry name" value="Aos1_SUMO"/>
    <property type="match status" value="1"/>
</dbReference>
<dbReference type="FunFam" id="3.40.50.720:FF:000404">
    <property type="entry name" value="SUMO-activating enzyme subunit 1B-2"/>
    <property type="match status" value="1"/>
</dbReference>
<dbReference type="Gene3D" id="3.40.50.720">
    <property type="entry name" value="NAD(P)-binding Rossmann-like Domain"/>
    <property type="match status" value="1"/>
</dbReference>
<dbReference type="InterPro" id="IPR045886">
    <property type="entry name" value="ThiF/MoeB/HesA"/>
</dbReference>
<dbReference type="InterPro" id="IPR000594">
    <property type="entry name" value="ThiF_NAD_FAD-bd"/>
</dbReference>
<dbReference type="InterPro" id="IPR035985">
    <property type="entry name" value="Ubiquitin-activating_enz"/>
</dbReference>
<dbReference type="InterPro" id="IPR000011">
    <property type="entry name" value="UBQ/SUMO-activ_enz_E1-like"/>
</dbReference>
<dbReference type="PANTHER" id="PTHR10953:SF162">
    <property type="entry name" value="SUMO-ACTIVATING ENZYME SUBUNIT 1"/>
    <property type="match status" value="1"/>
</dbReference>
<dbReference type="PANTHER" id="PTHR10953">
    <property type="entry name" value="UBIQUITIN-ACTIVATING ENZYME E1"/>
    <property type="match status" value="1"/>
</dbReference>
<dbReference type="Pfam" id="PF00899">
    <property type="entry name" value="ThiF"/>
    <property type="match status" value="1"/>
</dbReference>
<dbReference type="PRINTS" id="PR01849">
    <property type="entry name" value="UBIQUITINACT"/>
</dbReference>
<dbReference type="SUPFAM" id="SSF69572">
    <property type="entry name" value="Activating enzymes of the ubiquitin-like proteins"/>
    <property type="match status" value="1"/>
</dbReference>
<keyword id="KW-0007">Acetylation</keyword>
<keyword id="KW-0025">Alternative splicing</keyword>
<keyword id="KW-0436">Ligase</keyword>
<keyword id="KW-0539">Nucleus</keyword>
<keyword id="KW-1185">Reference proteome</keyword>
<keyword id="KW-0833">Ubl conjugation pathway</keyword>
<sequence length="320" mass="35655">MDGDELTEQETALYDRQIRVWGAGAQRRLSKSHVLVSGIKGTVAEFCKNIVLAGVGSVTLLDDRLVTTEVFNANFLILPDENAYVGKTVAEICCDSLKDFNPMVHVSIEKGDLSTLGVDFFEKFDVVVIGYSSRATKKAVNEKCRNLAKDVAFYTVDCRGSCGEIFVDLQNYKYTKKKLDETVECELTFPSFEEAVSVPWKPMPRRTAKLYFAMRVIELFEETEGRKPGECSLSDLPRVLKLKKELCEGNSVSENHIPDILLERLVSNNTEFPPACAIIGGILGQEVIKVISGKGEPLKNFFYFDAEDGKGVIEDLSHKL</sequence>
<gene>
    <name type="primary">SAE1B-2</name>
    <name type="synonym">SAE1-2</name>
    <name type="ordered locus">At5g50680</name>
    <name type="ORF">MFB16.15</name>
</gene>
<organism>
    <name type="scientific">Arabidopsis thaliana</name>
    <name type="common">Mouse-ear cress</name>
    <dbReference type="NCBI Taxonomy" id="3702"/>
    <lineage>
        <taxon>Eukaryota</taxon>
        <taxon>Viridiplantae</taxon>
        <taxon>Streptophyta</taxon>
        <taxon>Embryophyta</taxon>
        <taxon>Tracheophyta</taxon>
        <taxon>Spermatophyta</taxon>
        <taxon>Magnoliopsida</taxon>
        <taxon>eudicotyledons</taxon>
        <taxon>Gunneridae</taxon>
        <taxon>Pentapetalae</taxon>
        <taxon>rosids</taxon>
        <taxon>malvids</taxon>
        <taxon>Brassicales</taxon>
        <taxon>Brassicaceae</taxon>
        <taxon>Camelineae</taxon>
        <taxon>Arabidopsis</taxon>
    </lineage>
</organism>